<proteinExistence type="inferred from homology"/>
<sequence>MRVAQVVRNTSETQISVKIDLDGTGRQKLATGVPFLDHMLDQIARHGLVDLDIEANGDTHIDDHHTVEDVGITLGQAVAKAVGDRKGIRRYGHSYVPLDEALSRVVIDFSGRPGLEFHVPFTRARIGTFDVDLSIEFFRGFVNHAGVTLHIDNLRGVNAHHQLETVFKAFGRALRMAVELDERAAGQIPSTKGSL</sequence>
<protein>
    <recommendedName>
        <fullName evidence="1">Imidazoleglycerol-phosphate dehydratase</fullName>
        <shortName evidence="1">IGPD</shortName>
        <ecNumber evidence="1">4.2.1.19</ecNumber>
    </recommendedName>
</protein>
<gene>
    <name evidence="1" type="primary">hisB</name>
    <name type="ordered locus">BURPS1710b_3691</name>
</gene>
<evidence type="ECO:0000255" key="1">
    <source>
        <dbReference type="HAMAP-Rule" id="MF_00076"/>
    </source>
</evidence>
<name>HIS7_BURP1</name>
<dbReference type="EC" id="4.2.1.19" evidence="1"/>
<dbReference type="EMBL" id="CP000124">
    <property type="protein sequence ID" value="ABA50378.1"/>
    <property type="molecule type" value="Genomic_DNA"/>
</dbReference>
<dbReference type="RefSeq" id="WP_004527886.1">
    <property type="nucleotide sequence ID" value="NC_007434.1"/>
</dbReference>
<dbReference type="SMR" id="Q3JMZ8"/>
<dbReference type="EnsemblBacteria" id="ABA50378">
    <property type="protein sequence ID" value="ABA50378"/>
    <property type="gene ID" value="BURPS1710b_3691"/>
</dbReference>
<dbReference type="KEGG" id="bpm:BURPS1710b_3691"/>
<dbReference type="HOGENOM" id="CLU_044308_2_0_4"/>
<dbReference type="UniPathway" id="UPA00031">
    <property type="reaction ID" value="UER00011"/>
</dbReference>
<dbReference type="Proteomes" id="UP000002700">
    <property type="component" value="Chromosome I"/>
</dbReference>
<dbReference type="GO" id="GO:0005737">
    <property type="term" value="C:cytoplasm"/>
    <property type="evidence" value="ECO:0007669"/>
    <property type="project" value="UniProtKB-SubCell"/>
</dbReference>
<dbReference type="GO" id="GO:0004424">
    <property type="term" value="F:imidazoleglycerol-phosphate dehydratase activity"/>
    <property type="evidence" value="ECO:0007669"/>
    <property type="project" value="UniProtKB-UniRule"/>
</dbReference>
<dbReference type="GO" id="GO:0000105">
    <property type="term" value="P:L-histidine biosynthetic process"/>
    <property type="evidence" value="ECO:0007669"/>
    <property type="project" value="UniProtKB-UniRule"/>
</dbReference>
<dbReference type="CDD" id="cd07914">
    <property type="entry name" value="IGPD"/>
    <property type="match status" value="1"/>
</dbReference>
<dbReference type="FunFam" id="3.30.230.40:FF:000002">
    <property type="entry name" value="Imidazoleglycerol-phosphate dehydratase"/>
    <property type="match status" value="1"/>
</dbReference>
<dbReference type="FunFam" id="3.30.230.40:FF:000003">
    <property type="entry name" value="Imidazoleglycerol-phosphate dehydratase HisB"/>
    <property type="match status" value="1"/>
</dbReference>
<dbReference type="Gene3D" id="3.30.230.40">
    <property type="entry name" value="Imidazole glycerol phosphate dehydratase, domain 1"/>
    <property type="match status" value="2"/>
</dbReference>
<dbReference type="HAMAP" id="MF_00076">
    <property type="entry name" value="HisB"/>
    <property type="match status" value="1"/>
</dbReference>
<dbReference type="InterPro" id="IPR038494">
    <property type="entry name" value="IGPD_sf"/>
</dbReference>
<dbReference type="InterPro" id="IPR000807">
    <property type="entry name" value="ImidazoleglycerolP_deHydtase"/>
</dbReference>
<dbReference type="InterPro" id="IPR020565">
    <property type="entry name" value="ImidazoleglycerP_deHydtase_CS"/>
</dbReference>
<dbReference type="InterPro" id="IPR020568">
    <property type="entry name" value="Ribosomal_Su5_D2-typ_SF"/>
</dbReference>
<dbReference type="NCBIfam" id="NF002106">
    <property type="entry name" value="PRK00951.1-1"/>
    <property type="match status" value="1"/>
</dbReference>
<dbReference type="NCBIfam" id="NF002109">
    <property type="entry name" value="PRK00951.1-5"/>
    <property type="match status" value="1"/>
</dbReference>
<dbReference type="NCBIfam" id="NF002111">
    <property type="entry name" value="PRK00951.2-1"/>
    <property type="match status" value="1"/>
</dbReference>
<dbReference type="NCBIfam" id="NF002114">
    <property type="entry name" value="PRK00951.2-4"/>
    <property type="match status" value="1"/>
</dbReference>
<dbReference type="PANTHER" id="PTHR23133:SF2">
    <property type="entry name" value="IMIDAZOLEGLYCEROL-PHOSPHATE DEHYDRATASE"/>
    <property type="match status" value="1"/>
</dbReference>
<dbReference type="PANTHER" id="PTHR23133">
    <property type="entry name" value="IMIDAZOLEGLYCEROL-PHOSPHATE DEHYDRATASE HIS7"/>
    <property type="match status" value="1"/>
</dbReference>
<dbReference type="Pfam" id="PF00475">
    <property type="entry name" value="IGPD"/>
    <property type="match status" value="1"/>
</dbReference>
<dbReference type="SUPFAM" id="SSF54211">
    <property type="entry name" value="Ribosomal protein S5 domain 2-like"/>
    <property type="match status" value="2"/>
</dbReference>
<dbReference type="PROSITE" id="PS00954">
    <property type="entry name" value="IGP_DEHYDRATASE_1"/>
    <property type="match status" value="1"/>
</dbReference>
<dbReference type="PROSITE" id="PS00955">
    <property type="entry name" value="IGP_DEHYDRATASE_2"/>
    <property type="match status" value="1"/>
</dbReference>
<feature type="chain" id="PRO_1000010259" description="Imidazoleglycerol-phosphate dehydratase">
    <location>
        <begin position="1"/>
        <end position="195"/>
    </location>
</feature>
<reference key="1">
    <citation type="journal article" date="2010" name="Genome Biol. Evol.">
        <title>Continuing evolution of Burkholderia mallei through genome reduction and large-scale rearrangements.</title>
        <authorList>
            <person name="Losada L."/>
            <person name="Ronning C.M."/>
            <person name="DeShazer D."/>
            <person name="Woods D."/>
            <person name="Fedorova N."/>
            <person name="Kim H.S."/>
            <person name="Shabalina S.A."/>
            <person name="Pearson T.R."/>
            <person name="Brinkac L."/>
            <person name="Tan P."/>
            <person name="Nandi T."/>
            <person name="Crabtree J."/>
            <person name="Badger J."/>
            <person name="Beckstrom-Sternberg S."/>
            <person name="Saqib M."/>
            <person name="Schutzer S.E."/>
            <person name="Keim P."/>
            <person name="Nierman W.C."/>
        </authorList>
    </citation>
    <scope>NUCLEOTIDE SEQUENCE [LARGE SCALE GENOMIC DNA]</scope>
    <source>
        <strain>1710b</strain>
    </source>
</reference>
<accession>Q3JMZ8</accession>
<comment type="catalytic activity">
    <reaction evidence="1">
        <text>D-erythro-1-(imidazol-4-yl)glycerol 3-phosphate = 3-(imidazol-4-yl)-2-oxopropyl phosphate + H2O</text>
        <dbReference type="Rhea" id="RHEA:11040"/>
        <dbReference type="ChEBI" id="CHEBI:15377"/>
        <dbReference type="ChEBI" id="CHEBI:57766"/>
        <dbReference type="ChEBI" id="CHEBI:58278"/>
        <dbReference type="EC" id="4.2.1.19"/>
    </reaction>
</comment>
<comment type="pathway">
    <text evidence="1">Amino-acid biosynthesis; L-histidine biosynthesis; L-histidine from 5-phospho-alpha-D-ribose 1-diphosphate: step 6/9.</text>
</comment>
<comment type="subcellular location">
    <subcellularLocation>
        <location evidence="1">Cytoplasm</location>
    </subcellularLocation>
</comment>
<comment type="similarity">
    <text evidence="1">Belongs to the imidazoleglycerol-phosphate dehydratase family.</text>
</comment>
<keyword id="KW-0028">Amino-acid biosynthesis</keyword>
<keyword id="KW-0963">Cytoplasm</keyword>
<keyword id="KW-0368">Histidine biosynthesis</keyword>
<keyword id="KW-0456">Lyase</keyword>
<organism>
    <name type="scientific">Burkholderia pseudomallei (strain 1710b)</name>
    <dbReference type="NCBI Taxonomy" id="320372"/>
    <lineage>
        <taxon>Bacteria</taxon>
        <taxon>Pseudomonadati</taxon>
        <taxon>Pseudomonadota</taxon>
        <taxon>Betaproteobacteria</taxon>
        <taxon>Burkholderiales</taxon>
        <taxon>Burkholderiaceae</taxon>
        <taxon>Burkholderia</taxon>
        <taxon>pseudomallei group</taxon>
    </lineage>
</organism>